<feature type="signal peptide" evidence="1">
    <location>
        <begin position="1"/>
        <end position="23"/>
    </location>
</feature>
<feature type="peptide" id="PRO_0000001782" description="Peptide I" evidence="1">
    <location>
        <begin position="24"/>
        <end position="49"/>
    </location>
</feature>
<feature type="peptide" id="PRO_0000001783" description="Peptide II">
    <location>
        <begin position="52"/>
        <end position="63"/>
    </location>
</feature>
<feature type="peptide" id="PRO_0000001784" description="Histidine-rich basic peptide" evidence="1">
    <location>
        <begin position="66"/>
        <end position="108"/>
    </location>
</feature>
<feature type="modified residue" description="Pyrrolidone carboxylic acid (Glu); partial" evidence="2">
    <location>
        <position position="24"/>
    </location>
</feature>
<feature type="modified residue" description="Pyrrolidone carboxylic acid (Glu); partial" evidence="2">
    <location>
        <position position="52"/>
    </location>
</feature>
<feature type="modified residue" description="Pyrrolidone carboxylic acid" evidence="1">
    <location>
        <position position="66"/>
    </location>
</feature>
<organism>
    <name type="scientific">Aplysia californica</name>
    <name type="common">California sea hare</name>
    <dbReference type="NCBI Taxonomy" id="6500"/>
    <lineage>
        <taxon>Eukaryota</taxon>
        <taxon>Metazoa</taxon>
        <taxon>Spiralia</taxon>
        <taxon>Lophotrochozoa</taxon>
        <taxon>Mollusca</taxon>
        <taxon>Gastropoda</taxon>
        <taxon>Heterobranchia</taxon>
        <taxon>Euthyneura</taxon>
        <taxon>Tectipleura</taxon>
        <taxon>Aplysiida</taxon>
        <taxon>Aplysioidea</taxon>
        <taxon>Aplysiidae</taxon>
        <taxon>Aplysia</taxon>
    </lineage>
</organism>
<keyword id="KW-0165">Cleavage on pair of basic residues</keyword>
<keyword id="KW-0903">Direct protein sequencing</keyword>
<keyword id="KW-0527">Neuropeptide</keyword>
<keyword id="KW-0873">Pyrrolidone carboxylic acid</keyword>
<keyword id="KW-0964">Secreted</keyword>
<keyword id="KW-0732">Signal</keyword>
<reference key="1">
    <citation type="journal article" date="1983" name="Cell">
        <title>Gene isolation with cDNA probes from identified Aplysia neurons: neuropeptide modulators of cardiovascular physiology.</title>
        <authorList>
            <person name="Nambu J.R."/>
            <person name="Taussig R."/>
            <person name="Mahon A.C."/>
            <person name="Scheller R.H."/>
        </authorList>
    </citation>
    <scope>NUCLEOTIDE SEQUENCE [MRNA]</scope>
</reference>
<reference key="2">
    <citation type="journal article" date="1984" name="Science">
        <title>Neuropeptides: mediators of behavior in Aplysia.</title>
        <authorList>
            <person name="Scheller R.H."/>
            <person name="Kaldany R.-R."/>
            <person name="Kreiner T."/>
            <person name="Mahon A.C."/>
            <person name="Nambu J.R."/>
            <person name="Schaefer M."/>
            <person name="Taussig R."/>
        </authorList>
    </citation>
    <scope>NUCLEOTIDE SEQUENCE [MRNA]</scope>
</reference>
<reference key="3">
    <citation type="journal article" date="1989" name="Peptides">
        <title>Aplysia californica neurons R3-R14: primary structure of the myoactive histidine-rich basic peptide and peptide I.</title>
        <authorList>
            <person name="Nagle G.T."/>
            <person name="Knock S.L."/>
            <person name="Painter S.D."/>
            <person name="Blankenship J.E."/>
            <person name="Fritz R.R."/>
            <person name="Kurosky A."/>
        </authorList>
    </citation>
    <scope>PROTEIN SEQUENCE OF 24-54 AND 66-108</scope>
    <scope>PYROGLUTAMATE FORMATION AT GLN-66</scope>
    <source>
        <tissue>Abdominal ganglion</tissue>
    </source>
</reference>
<reference key="4">
    <citation type="journal article" date="1987" name="J. Neurosci.">
        <title>Proteolytic processing of the Aplysia egg-laying hormone and R3-14 neuropeptide precursors.</title>
        <authorList>
            <person name="Newcomb R."/>
            <person name="Scheller R.H."/>
        </authorList>
    </citation>
    <scope>PROTEOLYTIC PROCESSING</scope>
</reference>
<reference key="5">
    <citation type="journal article" date="1999" name="J. Neurochem.">
        <title>Formation of N-pyroglutamyl peptides from N-Glu and N-Gln precursors in Aplysia neurons.</title>
        <authorList>
            <person name="Garden R.W."/>
            <person name="Moroz T.P."/>
            <person name="Gleeson J.M."/>
            <person name="Floyd P.D."/>
            <person name="Li L."/>
            <person name="Rubakhin S.S."/>
            <person name="Sweedler J.V."/>
        </authorList>
    </citation>
    <scope>PYROGLUTAMATE FORMATION AT GLU-24 AND GLU-52</scope>
</reference>
<protein>
    <recommendedName>
        <fullName>Abdominal ganglion neuropeptide R3-14</fullName>
    </recommendedName>
    <component>
        <recommendedName>
            <fullName>Histidine-rich basic peptide</fullName>
            <shortName>HRBP</shortName>
        </recommendedName>
    </component>
    <component>
        <recommendedName>
            <fullName>Peptide I</fullName>
        </recommendedName>
    </component>
    <component>
        <recommendedName>
            <fullName>Peptide II</fullName>
        </recommendedName>
    </component>
</protein>
<evidence type="ECO:0000269" key="1">
    <source>
    </source>
</evidence>
<evidence type="ECO:0000269" key="2">
    <source>
    </source>
</evidence>
<dbReference type="EMBL" id="K01223">
    <property type="protein sequence ID" value="AAA27759.1"/>
    <property type="molecule type" value="mRNA"/>
</dbReference>
<dbReference type="EMBL" id="K02184">
    <property type="protein sequence ID" value="AAA27763.1"/>
    <property type="molecule type" value="mRNA"/>
</dbReference>
<dbReference type="EMBL" id="M64342">
    <property type="protein sequence ID" value="AAA27760.1"/>
    <property type="molecule type" value="Genomic_DNA"/>
</dbReference>
<dbReference type="EMBL" id="M64343">
    <property type="protein sequence ID" value="AAA27761.1"/>
    <property type="molecule type" value="mRNA"/>
</dbReference>
<dbReference type="PIR" id="A01635">
    <property type="entry name" value="NLGAAA"/>
</dbReference>
<dbReference type="RefSeq" id="NP_001191478.1">
    <property type="nucleotide sequence ID" value="NM_001204549.1"/>
</dbReference>
<dbReference type="EnsemblMetazoa" id="NM_001204549.1">
    <property type="protein sequence ID" value="NP_001191478.1"/>
    <property type="gene ID" value="LOC100533236"/>
</dbReference>
<dbReference type="GeneID" id="100533236"/>
<dbReference type="Proteomes" id="UP000694888">
    <property type="component" value="Unplaced"/>
</dbReference>
<dbReference type="GO" id="GO:0005576">
    <property type="term" value="C:extracellular region"/>
    <property type="evidence" value="ECO:0007669"/>
    <property type="project" value="UniProtKB-SubCell"/>
</dbReference>
<dbReference type="GO" id="GO:0007218">
    <property type="term" value="P:neuropeptide signaling pathway"/>
    <property type="evidence" value="ECO:0007669"/>
    <property type="project" value="UniProtKB-KW"/>
</dbReference>
<name>AGN3_APLCA</name>
<proteinExistence type="evidence at protein level"/>
<comment type="function">
    <text>HRBP is a myoactive peptide that excites Aplysia heart and enhances gut motility in vitro.</text>
</comment>
<comment type="subcellular location">
    <subcellularLocation>
        <location>Secreted</location>
    </subcellularLocation>
</comment>
<comment type="tissue specificity">
    <text>Neurons R3-R14. A cluster of 12 giant neurons located on the right side of the abdominal ganglion.</text>
</comment>
<comment type="PTM">
    <text evidence="2">The partial formation of pyroglutamate from N-terminal glutamic acid in peptides isolated from single cells is detected by mass spectrometry (PubMed:9930740). There are indications this modification depends on a heat sensitive factor.</text>
</comment>
<accession>P01364</accession>
<sequence>MQVLHLCLAVSIAVALLSQAAWSEEVFDDTDVGDELTNALESVLTDFKDKREAEEPSAFMTRLRRQVAQMHVWRAVNHDRNHGTGSGRHGRFLIRNRYRYGGGHLSDA</sequence>